<protein>
    <recommendedName>
        <fullName evidence="1">Succinate--CoA ligase [ADP-forming] subunit beta</fullName>
        <ecNumber evidence="1">6.2.1.5</ecNumber>
    </recommendedName>
    <alternativeName>
        <fullName evidence="1">Succinyl-CoA synthetase subunit beta</fullName>
        <shortName evidence="1">SCS-beta</shortName>
    </alternativeName>
</protein>
<gene>
    <name evidence="1" type="primary">sucC</name>
    <name type="ordered locus">RHA1_ro05573</name>
</gene>
<organism>
    <name type="scientific">Rhodococcus jostii (strain RHA1)</name>
    <dbReference type="NCBI Taxonomy" id="101510"/>
    <lineage>
        <taxon>Bacteria</taxon>
        <taxon>Bacillati</taxon>
        <taxon>Actinomycetota</taxon>
        <taxon>Actinomycetes</taxon>
        <taxon>Mycobacteriales</taxon>
        <taxon>Nocardiaceae</taxon>
        <taxon>Rhodococcus</taxon>
    </lineage>
</organism>
<accession>Q0S533</accession>
<evidence type="ECO:0000255" key="1">
    <source>
        <dbReference type="HAMAP-Rule" id="MF_00558"/>
    </source>
</evidence>
<proteinExistence type="inferred from homology"/>
<name>SUCC_RHOJR</name>
<reference key="1">
    <citation type="journal article" date="2006" name="Proc. Natl. Acad. Sci. U.S.A.">
        <title>The complete genome of Rhodococcus sp. RHA1 provides insights into a catabolic powerhouse.</title>
        <authorList>
            <person name="McLeod M.P."/>
            <person name="Warren R.L."/>
            <person name="Hsiao W.W.L."/>
            <person name="Araki N."/>
            <person name="Myhre M."/>
            <person name="Fernandes C."/>
            <person name="Miyazawa D."/>
            <person name="Wong W."/>
            <person name="Lillquist A.L."/>
            <person name="Wang D."/>
            <person name="Dosanjh M."/>
            <person name="Hara H."/>
            <person name="Petrescu A."/>
            <person name="Morin R.D."/>
            <person name="Yang G."/>
            <person name="Stott J.M."/>
            <person name="Schein J.E."/>
            <person name="Shin H."/>
            <person name="Smailus D."/>
            <person name="Siddiqui A.S."/>
            <person name="Marra M.A."/>
            <person name="Jones S.J.M."/>
            <person name="Holt R."/>
            <person name="Brinkman F.S.L."/>
            <person name="Miyauchi K."/>
            <person name="Fukuda M."/>
            <person name="Davies J.E."/>
            <person name="Mohn W.W."/>
            <person name="Eltis L.D."/>
        </authorList>
    </citation>
    <scope>NUCLEOTIDE SEQUENCE [LARGE SCALE GENOMIC DNA]</scope>
    <source>
        <strain>RHA1</strain>
    </source>
</reference>
<comment type="function">
    <text evidence="1">Succinyl-CoA synthetase functions in the citric acid cycle (TCA), coupling the hydrolysis of succinyl-CoA to the synthesis of either ATP or GTP and thus represents the only step of substrate-level phosphorylation in the TCA. The beta subunit provides nucleotide specificity of the enzyme and binds the substrate succinate, while the binding sites for coenzyme A and phosphate are found in the alpha subunit.</text>
</comment>
<comment type="catalytic activity">
    <reaction evidence="1">
        <text>succinate + ATP + CoA = succinyl-CoA + ADP + phosphate</text>
        <dbReference type="Rhea" id="RHEA:17661"/>
        <dbReference type="ChEBI" id="CHEBI:30031"/>
        <dbReference type="ChEBI" id="CHEBI:30616"/>
        <dbReference type="ChEBI" id="CHEBI:43474"/>
        <dbReference type="ChEBI" id="CHEBI:57287"/>
        <dbReference type="ChEBI" id="CHEBI:57292"/>
        <dbReference type="ChEBI" id="CHEBI:456216"/>
        <dbReference type="EC" id="6.2.1.5"/>
    </reaction>
    <physiologicalReaction direction="right-to-left" evidence="1">
        <dbReference type="Rhea" id="RHEA:17663"/>
    </physiologicalReaction>
</comment>
<comment type="catalytic activity">
    <reaction evidence="1">
        <text>GTP + succinate + CoA = succinyl-CoA + GDP + phosphate</text>
        <dbReference type="Rhea" id="RHEA:22120"/>
        <dbReference type="ChEBI" id="CHEBI:30031"/>
        <dbReference type="ChEBI" id="CHEBI:37565"/>
        <dbReference type="ChEBI" id="CHEBI:43474"/>
        <dbReference type="ChEBI" id="CHEBI:57287"/>
        <dbReference type="ChEBI" id="CHEBI:57292"/>
        <dbReference type="ChEBI" id="CHEBI:58189"/>
    </reaction>
    <physiologicalReaction direction="right-to-left" evidence="1">
        <dbReference type="Rhea" id="RHEA:22122"/>
    </physiologicalReaction>
</comment>
<comment type="cofactor">
    <cofactor evidence="1">
        <name>Mg(2+)</name>
        <dbReference type="ChEBI" id="CHEBI:18420"/>
    </cofactor>
    <text evidence="1">Binds 1 Mg(2+) ion per subunit.</text>
</comment>
<comment type="pathway">
    <text evidence="1">Carbohydrate metabolism; tricarboxylic acid cycle; succinate from succinyl-CoA (ligase route): step 1/1.</text>
</comment>
<comment type="subunit">
    <text evidence="1">Heterotetramer of two alpha and two beta subunits.</text>
</comment>
<comment type="similarity">
    <text evidence="1">Belongs to the succinate/malate CoA ligase beta subunit family.</text>
</comment>
<keyword id="KW-0067">ATP-binding</keyword>
<keyword id="KW-0436">Ligase</keyword>
<keyword id="KW-0460">Magnesium</keyword>
<keyword id="KW-0479">Metal-binding</keyword>
<keyword id="KW-0547">Nucleotide-binding</keyword>
<keyword id="KW-0816">Tricarboxylic acid cycle</keyword>
<dbReference type="EC" id="6.2.1.5" evidence="1"/>
<dbReference type="EMBL" id="CP000431">
    <property type="protein sequence ID" value="ABG97353.1"/>
    <property type="molecule type" value="Genomic_DNA"/>
</dbReference>
<dbReference type="RefSeq" id="WP_005238541.1">
    <property type="nucleotide sequence ID" value="NC_008268.1"/>
</dbReference>
<dbReference type="SMR" id="Q0S533"/>
<dbReference type="GeneID" id="69889934"/>
<dbReference type="KEGG" id="rha:RHA1_ro05573"/>
<dbReference type="eggNOG" id="COG0045">
    <property type="taxonomic scope" value="Bacteria"/>
</dbReference>
<dbReference type="HOGENOM" id="CLU_037430_0_2_11"/>
<dbReference type="OrthoDB" id="9802602at2"/>
<dbReference type="UniPathway" id="UPA00223">
    <property type="reaction ID" value="UER00999"/>
</dbReference>
<dbReference type="Proteomes" id="UP000008710">
    <property type="component" value="Chromosome"/>
</dbReference>
<dbReference type="GO" id="GO:0005829">
    <property type="term" value="C:cytosol"/>
    <property type="evidence" value="ECO:0007669"/>
    <property type="project" value="TreeGrafter"/>
</dbReference>
<dbReference type="GO" id="GO:0042709">
    <property type="term" value="C:succinate-CoA ligase complex"/>
    <property type="evidence" value="ECO:0007669"/>
    <property type="project" value="TreeGrafter"/>
</dbReference>
<dbReference type="GO" id="GO:0005524">
    <property type="term" value="F:ATP binding"/>
    <property type="evidence" value="ECO:0007669"/>
    <property type="project" value="UniProtKB-UniRule"/>
</dbReference>
<dbReference type="GO" id="GO:0000287">
    <property type="term" value="F:magnesium ion binding"/>
    <property type="evidence" value="ECO:0007669"/>
    <property type="project" value="UniProtKB-UniRule"/>
</dbReference>
<dbReference type="GO" id="GO:0004775">
    <property type="term" value="F:succinate-CoA ligase (ADP-forming) activity"/>
    <property type="evidence" value="ECO:0007669"/>
    <property type="project" value="UniProtKB-UniRule"/>
</dbReference>
<dbReference type="GO" id="GO:0004776">
    <property type="term" value="F:succinate-CoA ligase (GDP-forming) activity"/>
    <property type="evidence" value="ECO:0007669"/>
    <property type="project" value="RHEA"/>
</dbReference>
<dbReference type="GO" id="GO:0006104">
    <property type="term" value="P:succinyl-CoA metabolic process"/>
    <property type="evidence" value="ECO:0007669"/>
    <property type="project" value="TreeGrafter"/>
</dbReference>
<dbReference type="GO" id="GO:0006099">
    <property type="term" value="P:tricarboxylic acid cycle"/>
    <property type="evidence" value="ECO:0007669"/>
    <property type="project" value="UniProtKB-UniRule"/>
</dbReference>
<dbReference type="FunFam" id="3.30.1490.20:FF:000014">
    <property type="entry name" value="Succinate--CoA ligase [ADP-forming] subunit beta"/>
    <property type="match status" value="1"/>
</dbReference>
<dbReference type="FunFam" id="3.30.470.20:FF:000002">
    <property type="entry name" value="Succinate--CoA ligase [ADP-forming] subunit beta"/>
    <property type="match status" value="1"/>
</dbReference>
<dbReference type="FunFam" id="3.40.50.261:FF:000007">
    <property type="entry name" value="Succinate--CoA ligase [ADP-forming] subunit beta"/>
    <property type="match status" value="1"/>
</dbReference>
<dbReference type="Gene3D" id="3.30.1490.20">
    <property type="entry name" value="ATP-grasp fold, A domain"/>
    <property type="match status" value="1"/>
</dbReference>
<dbReference type="Gene3D" id="3.30.470.20">
    <property type="entry name" value="ATP-grasp fold, B domain"/>
    <property type="match status" value="1"/>
</dbReference>
<dbReference type="Gene3D" id="3.40.50.261">
    <property type="entry name" value="Succinyl-CoA synthetase domains"/>
    <property type="match status" value="1"/>
</dbReference>
<dbReference type="HAMAP" id="MF_00558">
    <property type="entry name" value="Succ_CoA_beta"/>
    <property type="match status" value="1"/>
</dbReference>
<dbReference type="InterPro" id="IPR011761">
    <property type="entry name" value="ATP-grasp"/>
</dbReference>
<dbReference type="InterPro" id="IPR013650">
    <property type="entry name" value="ATP-grasp_succ-CoA_synth-type"/>
</dbReference>
<dbReference type="InterPro" id="IPR013815">
    <property type="entry name" value="ATP_grasp_subdomain_1"/>
</dbReference>
<dbReference type="InterPro" id="IPR017866">
    <property type="entry name" value="Succ-CoA_synthase_bsu_CS"/>
</dbReference>
<dbReference type="InterPro" id="IPR005811">
    <property type="entry name" value="SUCC_ACL_C"/>
</dbReference>
<dbReference type="InterPro" id="IPR005809">
    <property type="entry name" value="Succ_CoA_ligase-like_bsu"/>
</dbReference>
<dbReference type="InterPro" id="IPR016102">
    <property type="entry name" value="Succinyl-CoA_synth-like"/>
</dbReference>
<dbReference type="NCBIfam" id="NF001913">
    <property type="entry name" value="PRK00696.1"/>
    <property type="match status" value="1"/>
</dbReference>
<dbReference type="NCBIfam" id="TIGR01016">
    <property type="entry name" value="sucCoAbeta"/>
    <property type="match status" value="1"/>
</dbReference>
<dbReference type="PANTHER" id="PTHR11815:SF10">
    <property type="entry name" value="SUCCINATE--COA LIGASE [GDP-FORMING] SUBUNIT BETA, MITOCHONDRIAL"/>
    <property type="match status" value="1"/>
</dbReference>
<dbReference type="PANTHER" id="PTHR11815">
    <property type="entry name" value="SUCCINYL-COA SYNTHETASE BETA CHAIN"/>
    <property type="match status" value="1"/>
</dbReference>
<dbReference type="Pfam" id="PF08442">
    <property type="entry name" value="ATP-grasp_2"/>
    <property type="match status" value="1"/>
</dbReference>
<dbReference type="Pfam" id="PF00549">
    <property type="entry name" value="Ligase_CoA"/>
    <property type="match status" value="1"/>
</dbReference>
<dbReference type="PIRSF" id="PIRSF001554">
    <property type="entry name" value="SucCS_beta"/>
    <property type="match status" value="1"/>
</dbReference>
<dbReference type="SUPFAM" id="SSF56059">
    <property type="entry name" value="Glutathione synthetase ATP-binding domain-like"/>
    <property type="match status" value="1"/>
</dbReference>
<dbReference type="SUPFAM" id="SSF52210">
    <property type="entry name" value="Succinyl-CoA synthetase domains"/>
    <property type="match status" value="1"/>
</dbReference>
<dbReference type="PROSITE" id="PS50975">
    <property type="entry name" value="ATP_GRASP"/>
    <property type="match status" value="1"/>
</dbReference>
<dbReference type="PROSITE" id="PS01217">
    <property type="entry name" value="SUCCINYL_COA_LIG_3"/>
    <property type="match status" value="1"/>
</dbReference>
<feature type="chain" id="PRO_1000082198" description="Succinate--CoA ligase [ADP-forming] subunit beta">
    <location>
        <begin position="1"/>
        <end position="389"/>
    </location>
</feature>
<feature type="domain" description="ATP-grasp" evidence="1">
    <location>
        <begin position="9"/>
        <end position="236"/>
    </location>
</feature>
<feature type="binding site" evidence="1">
    <location>
        <position position="45"/>
    </location>
    <ligand>
        <name>ATP</name>
        <dbReference type="ChEBI" id="CHEBI:30616"/>
    </ligand>
</feature>
<feature type="binding site" evidence="1">
    <location>
        <begin position="52"/>
        <end position="54"/>
    </location>
    <ligand>
        <name>ATP</name>
        <dbReference type="ChEBI" id="CHEBI:30616"/>
    </ligand>
</feature>
<feature type="binding site" evidence="1">
    <location>
        <position position="94"/>
    </location>
    <ligand>
        <name>ATP</name>
        <dbReference type="ChEBI" id="CHEBI:30616"/>
    </ligand>
</feature>
<feature type="binding site" evidence="1">
    <location>
        <position position="99"/>
    </location>
    <ligand>
        <name>ATP</name>
        <dbReference type="ChEBI" id="CHEBI:30616"/>
    </ligand>
</feature>
<feature type="binding site" evidence="1">
    <location>
        <position position="191"/>
    </location>
    <ligand>
        <name>Mg(2+)</name>
        <dbReference type="ChEBI" id="CHEBI:18420"/>
    </ligand>
</feature>
<feature type="binding site" evidence="1">
    <location>
        <position position="205"/>
    </location>
    <ligand>
        <name>Mg(2+)</name>
        <dbReference type="ChEBI" id="CHEBI:18420"/>
    </ligand>
</feature>
<feature type="binding site" evidence="1">
    <location>
        <position position="256"/>
    </location>
    <ligand>
        <name>substrate</name>
        <note>ligand shared with subunit alpha</note>
    </ligand>
</feature>
<feature type="binding site" evidence="1">
    <location>
        <begin position="318"/>
        <end position="320"/>
    </location>
    <ligand>
        <name>substrate</name>
        <note>ligand shared with subunit alpha</note>
    </ligand>
</feature>
<sequence length="389" mass="40815">MDLFEYQAKELFAKHEVPTSAGRVTDTVAGAREIAEEIGKPVMVKAQVKVGGRGKAGGVKYSADADAAQANAEAILGLDIKGHVVKKLLVAEASDIAEEYYISFLLDRTNRTYLAMCSVEGGVEIEVTAEENPDALAKIPVDAVKGVDLAFARSIAEAGKLPAEVLDAAAVTIQKLWEVFINEDALLVEVNPLVRTPDDQILALDGKVTLDENAAFRQPGHEAFEDKDATDPLELKAKENDLNYVKLDGEVGIIGNGAGLVMSTLDVVAYAGEKHGGVKPANFLDIGGGASAEVMANGLDVILNDAQVKSVFVNVFGGITACDAVANGIVGALKTLGDEANKPLVVRLDGNNVEEGRRILAEAAHPLVTVVGTMDEAADKAAELAFAAK</sequence>